<name>LPXK_NITWN</name>
<dbReference type="EC" id="2.7.1.130" evidence="1"/>
<dbReference type="EMBL" id="CP000115">
    <property type="protein sequence ID" value="ABA05808.1"/>
    <property type="molecule type" value="Genomic_DNA"/>
</dbReference>
<dbReference type="RefSeq" id="WP_011315759.1">
    <property type="nucleotide sequence ID" value="NC_007406.1"/>
</dbReference>
<dbReference type="SMR" id="Q3SPI3"/>
<dbReference type="STRING" id="323098.Nwi_2555"/>
<dbReference type="KEGG" id="nwi:Nwi_2555"/>
<dbReference type="eggNOG" id="COG1663">
    <property type="taxonomic scope" value="Bacteria"/>
</dbReference>
<dbReference type="HOGENOM" id="CLU_038816_0_0_5"/>
<dbReference type="OrthoDB" id="9766423at2"/>
<dbReference type="UniPathway" id="UPA00359">
    <property type="reaction ID" value="UER00482"/>
</dbReference>
<dbReference type="Proteomes" id="UP000002531">
    <property type="component" value="Chromosome"/>
</dbReference>
<dbReference type="GO" id="GO:0005886">
    <property type="term" value="C:plasma membrane"/>
    <property type="evidence" value="ECO:0007669"/>
    <property type="project" value="TreeGrafter"/>
</dbReference>
<dbReference type="GO" id="GO:0005524">
    <property type="term" value="F:ATP binding"/>
    <property type="evidence" value="ECO:0007669"/>
    <property type="project" value="UniProtKB-UniRule"/>
</dbReference>
<dbReference type="GO" id="GO:0009029">
    <property type="term" value="F:tetraacyldisaccharide 4'-kinase activity"/>
    <property type="evidence" value="ECO:0007669"/>
    <property type="project" value="UniProtKB-UniRule"/>
</dbReference>
<dbReference type="GO" id="GO:0009245">
    <property type="term" value="P:lipid A biosynthetic process"/>
    <property type="evidence" value="ECO:0007669"/>
    <property type="project" value="UniProtKB-UniRule"/>
</dbReference>
<dbReference type="GO" id="GO:0009244">
    <property type="term" value="P:lipopolysaccharide core region biosynthetic process"/>
    <property type="evidence" value="ECO:0007669"/>
    <property type="project" value="TreeGrafter"/>
</dbReference>
<dbReference type="HAMAP" id="MF_00409">
    <property type="entry name" value="LpxK"/>
    <property type="match status" value="1"/>
</dbReference>
<dbReference type="InterPro" id="IPR003758">
    <property type="entry name" value="LpxK"/>
</dbReference>
<dbReference type="InterPro" id="IPR027417">
    <property type="entry name" value="P-loop_NTPase"/>
</dbReference>
<dbReference type="NCBIfam" id="TIGR00682">
    <property type="entry name" value="lpxK"/>
    <property type="match status" value="1"/>
</dbReference>
<dbReference type="PANTHER" id="PTHR42724">
    <property type="entry name" value="TETRAACYLDISACCHARIDE 4'-KINASE"/>
    <property type="match status" value="1"/>
</dbReference>
<dbReference type="PANTHER" id="PTHR42724:SF1">
    <property type="entry name" value="TETRAACYLDISACCHARIDE 4'-KINASE, MITOCHONDRIAL-RELATED"/>
    <property type="match status" value="1"/>
</dbReference>
<dbReference type="Pfam" id="PF02606">
    <property type="entry name" value="LpxK"/>
    <property type="match status" value="1"/>
</dbReference>
<dbReference type="SUPFAM" id="SSF52540">
    <property type="entry name" value="P-loop containing nucleoside triphosphate hydrolases"/>
    <property type="match status" value="1"/>
</dbReference>
<feature type="chain" id="PRO_0000229966" description="Tetraacyldisaccharide 4'-kinase">
    <location>
        <begin position="1"/>
        <end position="337"/>
    </location>
</feature>
<feature type="binding site" evidence="1">
    <location>
        <begin position="51"/>
        <end position="58"/>
    </location>
    <ligand>
        <name>ATP</name>
        <dbReference type="ChEBI" id="CHEBI:30616"/>
    </ligand>
</feature>
<evidence type="ECO:0000255" key="1">
    <source>
        <dbReference type="HAMAP-Rule" id="MF_00409"/>
    </source>
</evidence>
<keyword id="KW-0067">ATP-binding</keyword>
<keyword id="KW-0418">Kinase</keyword>
<keyword id="KW-0441">Lipid A biosynthesis</keyword>
<keyword id="KW-0444">Lipid biosynthesis</keyword>
<keyword id="KW-0443">Lipid metabolism</keyword>
<keyword id="KW-0547">Nucleotide-binding</keyword>
<keyword id="KW-1185">Reference proteome</keyword>
<keyword id="KW-0808">Transferase</keyword>
<protein>
    <recommendedName>
        <fullName evidence="1">Tetraacyldisaccharide 4'-kinase</fullName>
        <ecNumber evidence="1">2.7.1.130</ecNumber>
    </recommendedName>
    <alternativeName>
        <fullName evidence="1">Lipid A 4'-kinase</fullName>
    </alternativeName>
</protein>
<organism>
    <name type="scientific">Nitrobacter winogradskyi (strain ATCC 25391 / DSM 10237 / CIP 104748 / NCIMB 11846 / Nb-255)</name>
    <dbReference type="NCBI Taxonomy" id="323098"/>
    <lineage>
        <taxon>Bacteria</taxon>
        <taxon>Pseudomonadati</taxon>
        <taxon>Pseudomonadota</taxon>
        <taxon>Alphaproteobacteria</taxon>
        <taxon>Hyphomicrobiales</taxon>
        <taxon>Nitrobacteraceae</taxon>
        <taxon>Nitrobacter</taxon>
    </lineage>
</organism>
<sequence>MREPAFWRRPSSLLSRLLIPVGALYGAIAARRLSRTGLRAGVPVICVGNYHLGGAGKTPTVLALAGILRSLGETPVVISRGYGGRLRGPVRVDPDRHAAADVGDEPLMMARTLPVIVSRQRAAGVAPARALGASVILMDDGFQNPTLARDISLIVIDGDRGLGNRRIFPAGPLRAPLPPQLARTDALVIVGPGSAADDIAASIEARGGPVLRARVVPDEASVAALRGRRVLAFAGIGDPSRFFRGLRACGVDVAAERAFADHHPFSQRDVAALQSAAEKDGLTLVTTEKDLARLRNNENIAAFAQAVAPFAVTLAFDDETALRSFLMDGIAKVRRLD</sequence>
<proteinExistence type="inferred from homology"/>
<accession>Q3SPI3</accession>
<reference key="1">
    <citation type="journal article" date="2006" name="Appl. Environ. Microbiol.">
        <title>Genome sequence of the chemolithoautotrophic nitrite-oxidizing bacterium Nitrobacter winogradskyi Nb-255.</title>
        <authorList>
            <person name="Starkenburg S.R."/>
            <person name="Chain P.S.G."/>
            <person name="Sayavedra-Soto L.A."/>
            <person name="Hauser L."/>
            <person name="Land M.L."/>
            <person name="Larimer F.W."/>
            <person name="Malfatti S.A."/>
            <person name="Klotz M.G."/>
            <person name="Bottomley P.J."/>
            <person name="Arp D.J."/>
            <person name="Hickey W.J."/>
        </authorList>
    </citation>
    <scope>NUCLEOTIDE SEQUENCE [LARGE SCALE GENOMIC DNA]</scope>
    <source>
        <strain>ATCC 25391 / DSM 10237 / CIP 104748 / NCIMB 11846 / Nb-255</strain>
    </source>
</reference>
<gene>
    <name evidence="1" type="primary">lpxK</name>
    <name type="ordered locus">Nwi_2555</name>
</gene>
<comment type="function">
    <text evidence="1">Transfers the gamma-phosphate of ATP to the 4'-position of a tetraacyldisaccharide 1-phosphate intermediate (termed DS-1-P) to form tetraacyldisaccharide 1,4'-bis-phosphate (lipid IVA).</text>
</comment>
<comment type="catalytic activity">
    <reaction evidence="1">
        <text>a lipid A disaccharide + ATP = a lipid IVA + ADP + H(+)</text>
        <dbReference type="Rhea" id="RHEA:67840"/>
        <dbReference type="ChEBI" id="CHEBI:15378"/>
        <dbReference type="ChEBI" id="CHEBI:30616"/>
        <dbReference type="ChEBI" id="CHEBI:176343"/>
        <dbReference type="ChEBI" id="CHEBI:176425"/>
        <dbReference type="ChEBI" id="CHEBI:456216"/>
        <dbReference type="EC" id="2.7.1.130"/>
    </reaction>
</comment>
<comment type="pathway">
    <text evidence="1">Glycolipid biosynthesis; lipid IV(A) biosynthesis; lipid IV(A) from (3R)-3-hydroxytetradecanoyl-[acyl-carrier-protein] and UDP-N-acetyl-alpha-D-glucosamine: step 6/6.</text>
</comment>
<comment type="similarity">
    <text evidence="1">Belongs to the LpxK family.</text>
</comment>